<accession>Q2KA96</accession>
<gene>
    <name evidence="1" type="primary">rplI</name>
    <name type="ordered locus">RHE_CH01437</name>
</gene>
<keyword id="KW-1185">Reference proteome</keyword>
<keyword id="KW-0687">Ribonucleoprotein</keyword>
<keyword id="KW-0689">Ribosomal protein</keyword>
<keyword id="KW-0694">RNA-binding</keyword>
<keyword id="KW-0699">rRNA-binding</keyword>
<protein>
    <recommendedName>
        <fullName evidence="1">Large ribosomal subunit protein bL9</fullName>
    </recommendedName>
    <alternativeName>
        <fullName evidence="3">50S ribosomal protein L9</fullName>
    </alternativeName>
</protein>
<organism>
    <name type="scientific">Rhizobium etli (strain ATCC 51251 / DSM 11541 / JCM 21823 / NBRC 15573 / CFN 42)</name>
    <dbReference type="NCBI Taxonomy" id="347834"/>
    <lineage>
        <taxon>Bacteria</taxon>
        <taxon>Pseudomonadati</taxon>
        <taxon>Pseudomonadota</taxon>
        <taxon>Alphaproteobacteria</taxon>
        <taxon>Hyphomicrobiales</taxon>
        <taxon>Rhizobiaceae</taxon>
        <taxon>Rhizobium/Agrobacterium group</taxon>
        <taxon>Rhizobium</taxon>
    </lineage>
</organism>
<evidence type="ECO:0000255" key="1">
    <source>
        <dbReference type="HAMAP-Rule" id="MF_00503"/>
    </source>
</evidence>
<evidence type="ECO:0000256" key="2">
    <source>
        <dbReference type="SAM" id="MobiDB-lite"/>
    </source>
</evidence>
<evidence type="ECO:0000305" key="3"/>
<feature type="chain" id="PRO_0000258479" description="Large ribosomal subunit protein bL9">
    <location>
        <begin position="1"/>
        <end position="192"/>
    </location>
</feature>
<feature type="region of interest" description="Disordered" evidence="2">
    <location>
        <begin position="173"/>
        <end position="192"/>
    </location>
</feature>
<feature type="compositionally biased region" description="Acidic residues" evidence="2">
    <location>
        <begin position="179"/>
        <end position="192"/>
    </location>
</feature>
<proteinExistence type="inferred from homology"/>
<name>RL9_RHIEC</name>
<comment type="function">
    <text evidence="1">Binds to the 23S rRNA.</text>
</comment>
<comment type="similarity">
    <text evidence="1">Belongs to the bacterial ribosomal protein bL9 family.</text>
</comment>
<sequence>MEVILLERISKLGQMGETVKVRDGFARNYLLPLGKALRANAANKARFESERATLEARNLERKSEAQKVADVLDGKSFIVVRSAGETGQLYGSVAARDVVEVLAAEGFNIGRNQVHLNTPIKAIGLHKVELQLHAEVEINIELNVARSAEEAERQAKGEELTSVDAIYGVDEDALRPEDFFDPEADGLDENEA</sequence>
<reference key="1">
    <citation type="journal article" date="2006" name="Proc. Natl. Acad. Sci. U.S.A.">
        <title>The partitioned Rhizobium etli genome: genetic and metabolic redundancy in seven interacting replicons.</title>
        <authorList>
            <person name="Gonzalez V."/>
            <person name="Santamaria R.I."/>
            <person name="Bustos P."/>
            <person name="Hernandez-Gonzalez I."/>
            <person name="Medrano-Soto A."/>
            <person name="Moreno-Hagelsieb G."/>
            <person name="Janga S.C."/>
            <person name="Ramirez M.A."/>
            <person name="Jimenez-Jacinto V."/>
            <person name="Collado-Vides J."/>
            <person name="Davila G."/>
        </authorList>
    </citation>
    <scope>NUCLEOTIDE SEQUENCE [LARGE SCALE GENOMIC DNA]</scope>
    <source>
        <strain>ATCC 51251 / DSM 11541 / JCM 21823 / NBRC 15573 / CFN 42</strain>
    </source>
</reference>
<dbReference type="EMBL" id="CP000133">
    <property type="protein sequence ID" value="ABC90240.1"/>
    <property type="molecule type" value="Genomic_DNA"/>
</dbReference>
<dbReference type="RefSeq" id="WP_011424772.1">
    <property type="nucleotide sequence ID" value="NC_007761.1"/>
</dbReference>
<dbReference type="SMR" id="Q2KA96"/>
<dbReference type="KEGG" id="ret:RHE_CH01437"/>
<dbReference type="eggNOG" id="COG0359">
    <property type="taxonomic scope" value="Bacteria"/>
</dbReference>
<dbReference type="HOGENOM" id="CLU_078938_1_0_5"/>
<dbReference type="OrthoDB" id="9788336at2"/>
<dbReference type="Proteomes" id="UP000001936">
    <property type="component" value="Chromosome"/>
</dbReference>
<dbReference type="GO" id="GO:1990904">
    <property type="term" value="C:ribonucleoprotein complex"/>
    <property type="evidence" value="ECO:0007669"/>
    <property type="project" value="UniProtKB-KW"/>
</dbReference>
<dbReference type="GO" id="GO:0005840">
    <property type="term" value="C:ribosome"/>
    <property type="evidence" value="ECO:0007669"/>
    <property type="project" value="UniProtKB-KW"/>
</dbReference>
<dbReference type="GO" id="GO:0019843">
    <property type="term" value="F:rRNA binding"/>
    <property type="evidence" value="ECO:0007669"/>
    <property type="project" value="UniProtKB-UniRule"/>
</dbReference>
<dbReference type="GO" id="GO:0003735">
    <property type="term" value="F:structural constituent of ribosome"/>
    <property type="evidence" value="ECO:0007669"/>
    <property type="project" value="InterPro"/>
</dbReference>
<dbReference type="GO" id="GO:0006412">
    <property type="term" value="P:translation"/>
    <property type="evidence" value="ECO:0007669"/>
    <property type="project" value="UniProtKB-UniRule"/>
</dbReference>
<dbReference type="Gene3D" id="3.10.430.100">
    <property type="entry name" value="Ribosomal protein L9, C-terminal domain"/>
    <property type="match status" value="1"/>
</dbReference>
<dbReference type="Gene3D" id="3.40.5.10">
    <property type="entry name" value="Ribosomal protein L9, N-terminal domain"/>
    <property type="match status" value="1"/>
</dbReference>
<dbReference type="HAMAP" id="MF_00503">
    <property type="entry name" value="Ribosomal_bL9"/>
    <property type="match status" value="1"/>
</dbReference>
<dbReference type="InterPro" id="IPR000244">
    <property type="entry name" value="Ribosomal_bL9"/>
</dbReference>
<dbReference type="InterPro" id="IPR009027">
    <property type="entry name" value="Ribosomal_bL9/RNase_H1_N"/>
</dbReference>
<dbReference type="InterPro" id="IPR020594">
    <property type="entry name" value="Ribosomal_bL9_bac/chp"/>
</dbReference>
<dbReference type="InterPro" id="IPR020069">
    <property type="entry name" value="Ribosomal_bL9_C"/>
</dbReference>
<dbReference type="InterPro" id="IPR036791">
    <property type="entry name" value="Ribosomal_bL9_C_sf"/>
</dbReference>
<dbReference type="InterPro" id="IPR020070">
    <property type="entry name" value="Ribosomal_bL9_N"/>
</dbReference>
<dbReference type="InterPro" id="IPR036935">
    <property type="entry name" value="Ribosomal_bL9_N_sf"/>
</dbReference>
<dbReference type="NCBIfam" id="TIGR00158">
    <property type="entry name" value="L9"/>
    <property type="match status" value="1"/>
</dbReference>
<dbReference type="PANTHER" id="PTHR21368">
    <property type="entry name" value="50S RIBOSOMAL PROTEIN L9"/>
    <property type="match status" value="1"/>
</dbReference>
<dbReference type="Pfam" id="PF03948">
    <property type="entry name" value="Ribosomal_L9_C"/>
    <property type="match status" value="1"/>
</dbReference>
<dbReference type="Pfam" id="PF01281">
    <property type="entry name" value="Ribosomal_L9_N"/>
    <property type="match status" value="1"/>
</dbReference>
<dbReference type="SUPFAM" id="SSF55658">
    <property type="entry name" value="L9 N-domain-like"/>
    <property type="match status" value="1"/>
</dbReference>
<dbReference type="SUPFAM" id="SSF55653">
    <property type="entry name" value="Ribosomal protein L9 C-domain"/>
    <property type="match status" value="1"/>
</dbReference>
<dbReference type="PROSITE" id="PS00651">
    <property type="entry name" value="RIBOSOMAL_L9"/>
    <property type="match status" value="1"/>
</dbReference>